<name>Y1028_HAEIN</name>
<gene>
    <name type="ordered locus">HI_1028</name>
</gene>
<accession>P44992</accession>
<evidence type="ECO:0000255" key="1"/>
<evidence type="ECO:0000305" key="2"/>
<organism>
    <name type="scientific">Haemophilus influenzae (strain ATCC 51907 / DSM 11121 / KW20 / Rd)</name>
    <dbReference type="NCBI Taxonomy" id="71421"/>
    <lineage>
        <taxon>Bacteria</taxon>
        <taxon>Pseudomonadati</taxon>
        <taxon>Pseudomonadota</taxon>
        <taxon>Gammaproteobacteria</taxon>
        <taxon>Pasteurellales</taxon>
        <taxon>Pasteurellaceae</taxon>
        <taxon>Haemophilus</taxon>
    </lineage>
</organism>
<keyword id="KW-0903">Direct protein sequencing</keyword>
<keyword id="KW-0574">Periplasm</keyword>
<keyword id="KW-1185">Reference proteome</keyword>
<keyword id="KW-0732">Signal</keyword>
<keyword id="KW-0813">Transport</keyword>
<reference key="1">
    <citation type="journal article" date="1995" name="Science">
        <title>Whole-genome random sequencing and assembly of Haemophilus influenzae Rd.</title>
        <authorList>
            <person name="Fleischmann R.D."/>
            <person name="Adams M.D."/>
            <person name="White O."/>
            <person name="Clayton R.A."/>
            <person name="Kirkness E.F."/>
            <person name="Kerlavage A.R."/>
            <person name="Bult C.J."/>
            <person name="Tomb J.-F."/>
            <person name="Dougherty B.A."/>
            <person name="Merrick J.M."/>
            <person name="McKenney K."/>
            <person name="Sutton G.G."/>
            <person name="FitzHugh W."/>
            <person name="Fields C.A."/>
            <person name="Gocayne J.D."/>
            <person name="Scott J.D."/>
            <person name="Shirley R."/>
            <person name="Liu L.-I."/>
            <person name="Glodek A."/>
            <person name="Kelley J.M."/>
            <person name="Weidman J.F."/>
            <person name="Phillips C.A."/>
            <person name="Spriggs T."/>
            <person name="Hedblom E."/>
            <person name="Cotton M.D."/>
            <person name="Utterback T.R."/>
            <person name="Hanna M.C."/>
            <person name="Nguyen D.T."/>
            <person name="Saudek D.M."/>
            <person name="Brandon R.C."/>
            <person name="Fine L.D."/>
            <person name="Fritchman J.L."/>
            <person name="Fuhrmann J.L."/>
            <person name="Geoghagen N.S.M."/>
            <person name="Gnehm C.L."/>
            <person name="McDonald L.A."/>
            <person name="Small K.V."/>
            <person name="Fraser C.M."/>
            <person name="Smith H.O."/>
            <person name="Venter J.C."/>
        </authorList>
    </citation>
    <scope>NUCLEOTIDE SEQUENCE [LARGE SCALE GENOMIC DNA]</scope>
    <source>
        <strain>ATCC 51907 / DSM 11121 / KW20 / Rd</strain>
    </source>
</reference>
<reference key="2">
    <citation type="journal article" date="2000" name="Electrophoresis">
        <title>Two-dimensional map of the proteome of Haemophilus influenzae.</title>
        <authorList>
            <person name="Langen H."/>
            <person name="Takacs B."/>
            <person name="Evers S."/>
            <person name="Berndt P."/>
            <person name="Lahm H.W."/>
            <person name="Wipf B."/>
            <person name="Gray C."/>
            <person name="Fountoulakis M."/>
        </authorList>
    </citation>
    <scope>PROTEIN SEQUENCE OF 262-266</scope>
    <scope>IDENTIFICATION BY MASS SPECTROMETRY</scope>
    <source>
        <strain>ATCC 51907 / DSM 11121 / KW20 / Rd</strain>
    </source>
</reference>
<comment type="subcellular location">
    <subcellularLocation>
        <location evidence="2">Periplasm</location>
    </subcellularLocation>
</comment>
<comment type="similarity">
    <text evidence="2">Belongs to the bacterial solute-binding protein 7 family.</text>
</comment>
<feature type="signal peptide" evidence="1">
    <location>
        <begin position="1"/>
        <end position="25"/>
    </location>
</feature>
<feature type="chain" id="PRO_0000031814" description="Uncharacterized protein HI_1028">
    <location>
        <begin position="26"/>
        <end position="328"/>
    </location>
</feature>
<dbReference type="EMBL" id="L42023">
    <property type="protein sequence ID" value="AAC22688.1"/>
    <property type="molecule type" value="Genomic_DNA"/>
</dbReference>
<dbReference type="PIR" id="I64164">
    <property type="entry name" value="I64164"/>
</dbReference>
<dbReference type="RefSeq" id="NP_439188.1">
    <property type="nucleotide sequence ID" value="NC_000907.1"/>
</dbReference>
<dbReference type="SMR" id="P44992"/>
<dbReference type="STRING" id="71421.HI_1028"/>
<dbReference type="EnsemblBacteria" id="AAC22688">
    <property type="protein sequence ID" value="AAC22688"/>
    <property type="gene ID" value="HI_1028"/>
</dbReference>
<dbReference type="KEGG" id="hin:HI_1028"/>
<dbReference type="PATRIC" id="fig|71421.8.peg.1072"/>
<dbReference type="eggNOG" id="COG1638">
    <property type="taxonomic scope" value="Bacteria"/>
</dbReference>
<dbReference type="HOGENOM" id="CLU_036176_1_3_6"/>
<dbReference type="OrthoDB" id="9771186at2"/>
<dbReference type="PhylomeDB" id="P44992"/>
<dbReference type="BioCyc" id="HINF71421:G1GJ1-1068-MONOMER"/>
<dbReference type="Proteomes" id="UP000000579">
    <property type="component" value="Chromosome"/>
</dbReference>
<dbReference type="GO" id="GO:0030288">
    <property type="term" value="C:outer membrane-bounded periplasmic space"/>
    <property type="evidence" value="ECO:0007669"/>
    <property type="project" value="InterPro"/>
</dbReference>
<dbReference type="GO" id="GO:0030246">
    <property type="term" value="F:carbohydrate binding"/>
    <property type="evidence" value="ECO:0000318"/>
    <property type="project" value="GO_Central"/>
</dbReference>
<dbReference type="GO" id="GO:0055085">
    <property type="term" value="P:transmembrane transport"/>
    <property type="evidence" value="ECO:0007669"/>
    <property type="project" value="InterPro"/>
</dbReference>
<dbReference type="CDD" id="cd13679">
    <property type="entry name" value="PBP2_TRAP_YiaO_like"/>
    <property type="match status" value="1"/>
</dbReference>
<dbReference type="FunFam" id="3.40.190.170:FF:000001">
    <property type="entry name" value="TRAP dicarboxylate transporter, DctP subunit"/>
    <property type="match status" value="1"/>
</dbReference>
<dbReference type="Gene3D" id="3.40.190.170">
    <property type="entry name" value="Bacterial extracellular solute-binding protein, family 7"/>
    <property type="match status" value="1"/>
</dbReference>
<dbReference type="InterPro" id="IPR018389">
    <property type="entry name" value="DctP_fam"/>
</dbReference>
<dbReference type="InterPro" id="IPR004682">
    <property type="entry name" value="TRAP_DctP"/>
</dbReference>
<dbReference type="InterPro" id="IPR038404">
    <property type="entry name" value="TRAP_DctP_sf"/>
</dbReference>
<dbReference type="NCBIfam" id="TIGR00787">
    <property type="entry name" value="dctP"/>
    <property type="match status" value="1"/>
</dbReference>
<dbReference type="NCBIfam" id="NF037995">
    <property type="entry name" value="TRAP_S1"/>
    <property type="match status" value="1"/>
</dbReference>
<dbReference type="PANTHER" id="PTHR33376">
    <property type="match status" value="1"/>
</dbReference>
<dbReference type="PANTHER" id="PTHR33376:SF18">
    <property type="entry name" value="2,3-DIKETO-L-GULONATE-BINDING PERIPLASMIC PROTEIN YIAO"/>
    <property type="match status" value="1"/>
</dbReference>
<dbReference type="Pfam" id="PF03480">
    <property type="entry name" value="DctP"/>
    <property type="match status" value="1"/>
</dbReference>
<dbReference type="PIRSF" id="PIRSF006470">
    <property type="entry name" value="DctB"/>
    <property type="match status" value="1"/>
</dbReference>
<protein>
    <recommendedName>
        <fullName>Uncharacterized protein HI_1028</fullName>
    </recommendedName>
</protein>
<proteinExistence type="evidence at protein level"/>
<sequence>MKLFNFKKLSMLIAGFTLVTSPALAEISLRFGYEAPRSDSQHSAAKKFNDLLMKKTKGEIKLKLFPDSTLGNAQTMISSVRGGTIDLEMSGSPNFTGLEPKLNVIDIPFIFKDREHVYKVLDGEVGQNLLKDLEKQGLKGLAFWDVGFRAFSNSKQTVTKPEHIKGLKVRTNQNPMYIEAFKLLGSNPVPMPLAELYTALETRAVDAQEHPIGIFWSSKLYEVQKYLSLTNHGYTPLIVVMNKAKFDSLLPALQTAIIEAAKEAGQFQRDLNVKNEQNIISKLRKQGVEVIEKINTEPFKTLIEEKVRKSFIEKHGDDLLKKVDALSE</sequence>